<name>SYFA_BACCR</name>
<sequence>MEARLKELKQKALELIEEAKELKGLNDVRVAYLGKKGPITEVLRGMGKLSAEERPRMGALVNEVREAIQTRLDDKISNLEKAVIEAKLATETIDVTLPGRPVETGCHHPLTAVVEQIEDVFIGMGYEVAEGTEVEKDYYNFEALNLPKDHPARDMQDTFYITEETLLRTHTSSVQARTMENNKEKGPIKIICPGKVYRRDDDDATHSHQFMQIEGLVIDKNIRMSDLKGTLQVFVKKMFGEDREIRLRPSFFPFTEPSVEMDISCMMCHGKGCGTCKGTGWIEILGAGMVHPNVLEMAGYDSKEYQGFAFGMGAERIAMLKYGVDDIRHFYTNDVRFLQQFKRA</sequence>
<gene>
    <name evidence="1" type="primary">pheS</name>
    <name type="ordered locus">BC_4561</name>
</gene>
<organism>
    <name type="scientific">Bacillus cereus (strain ATCC 14579 / DSM 31 / CCUG 7414 / JCM 2152 / NBRC 15305 / NCIMB 9373 / NCTC 2599 / NRRL B-3711)</name>
    <dbReference type="NCBI Taxonomy" id="226900"/>
    <lineage>
        <taxon>Bacteria</taxon>
        <taxon>Bacillati</taxon>
        <taxon>Bacillota</taxon>
        <taxon>Bacilli</taxon>
        <taxon>Bacillales</taxon>
        <taxon>Bacillaceae</taxon>
        <taxon>Bacillus</taxon>
        <taxon>Bacillus cereus group</taxon>
    </lineage>
</organism>
<keyword id="KW-0030">Aminoacyl-tRNA synthetase</keyword>
<keyword id="KW-0067">ATP-binding</keyword>
<keyword id="KW-0963">Cytoplasm</keyword>
<keyword id="KW-0436">Ligase</keyword>
<keyword id="KW-0460">Magnesium</keyword>
<keyword id="KW-0479">Metal-binding</keyword>
<keyword id="KW-0547">Nucleotide-binding</keyword>
<keyword id="KW-0648">Protein biosynthesis</keyword>
<keyword id="KW-1185">Reference proteome</keyword>
<dbReference type="EC" id="6.1.1.20" evidence="1"/>
<dbReference type="EMBL" id="AE016877">
    <property type="protein sequence ID" value="AAP11468.1"/>
    <property type="molecule type" value="Genomic_DNA"/>
</dbReference>
<dbReference type="RefSeq" id="NP_834267.1">
    <property type="nucleotide sequence ID" value="NC_004722.1"/>
</dbReference>
<dbReference type="RefSeq" id="WP_000388219.1">
    <property type="nucleotide sequence ID" value="NZ_CP138336.1"/>
</dbReference>
<dbReference type="SMR" id="Q817I6"/>
<dbReference type="STRING" id="226900.BC_4561"/>
<dbReference type="GeneID" id="83638271"/>
<dbReference type="KEGG" id="bce:BC4561"/>
<dbReference type="PATRIC" id="fig|226900.8.peg.4721"/>
<dbReference type="HOGENOM" id="CLU_025086_0_1_9"/>
<dbReference type="OrthoDB" id="9800719at2"/>
<dbReference type="Proteomes" id="UP000001417">
    <property type="component" value="Chromosome"/>
</dbReference>
<dbReference type="GO" id="GO:0005737">
    <property type="term" value="C:cytoplasm"/>
    <property type="evidence" value="ECO:0000318"/>
    <property type="project" value="GO_Central"/>
</dbReference>
<dbReference type="GO" id="GO:0005524">
    <property type="term" value="F:ATP binding"/>
    <property type="evidence" value="ECO:0007669"/>
    <property type="project" value="UniProtKB-UniRule"/>
</dbReference>
<dbReference type="GO" id="GO:0140096">
    <property type="term" value="F:catalytic activity, acting on a protein"/>
    <property type="evidence" value="ECO:0007669"/>
    <property type="project" value="UniProtKB-ARBA"/>
</dbReference>
<dbReference type="GO" id="GO:0000287">
    <property type="term" value="F:magnesium ion binding"/>
    <property type="evidence" value="ECO:0007669"/>
    <property type="project" value="UniProtKB-UniRule"/>
</dbReference>
<dbReference type="GO" id="GO:0004826">
    <property type="term" value="F:phenylalanine-tRNA ligase activity"/>
    <property type="evidence" value="ECO:0000318"/>
    <property type="project" value="GO_Central"/>
</dbReference>
<dbReference type="GO" id="GO:0016740">
    <property type="term" value="F:transferase activity"/>
    <property type="evidence" value="ECO:0007669"/>
    <property type="project" value="UniProtKB-ARBA"/>
</dbReference>
<dbReference type="GO" id="GO:0000049">
    <property type="term" value="F:tRNA binding"/>
    <property type="evidence" value="ECO:0007669"/>
    <property type="project" value="InterPro"/>
</dbReference>
<dbReference type="GO" id="GO:0006432">
    <property type="term" value="P:phenylalanyl-tRNA aminoacylation"/>
    <property type="evidence" value="ECO:0000318"/>
    <property type="project" value="GO_Central"/>
</dbReference>
<dbReference type="CDD" id="cd00496">
    <property type="entry name" value="PheRS_alpha_core"/>
    <property type="match status" value="1"/>
</dbReference>
<dbReference type="FunFam" id="3.30.930.10:FF:000003">
    <property type="entry name" value="Phenylalanine--tRNA ligase alpha subunit"/>
    <property type="match status" value="1"/>
</dbReference>
<dbReference type="Gene3D" id="3.30.930.10">
    <property type="entry name" value="Bira Bifunctional Protein, Domain 2"/>
    <property type="match status" value="1"/>
</dbReference>
<dbReference type="HAMAP" id="MF_00281">
    <property type="entry name" value="Phe_tRNA_synth_alpha1"/>
    <property type="match status" value="1"/>
</dbReference>
<dbReference type="InterPro" id="IPR006195">
    <property type="entry name" value="aa-tRNA-synth_II"/>
</dbReference>
<dbReference type="InterPro" id="IPR045864">
    <property type="entry name" value="aa-tRNA-synth_II/BPL/LPL"/>
</dbReference>
<dbReference type="InterPro" id="IPR004529">
    <property type="entry name" value="Phe-tRNA-synth_IIc_asu"/>
</dbReference>
<dbReference type="InterPro" id="IPR004188">
    <property type="entry name" value="Phe-tRNA_ligase_II_N"/>
</dbReference>
<dbReference type="InterPro" id="IPR022911">
    <property type="entry name" value="Phe_tRNA_ligase_alpha1_bac"/>
</dbReference>
<dbReference type="InterPro" id="IPR002319">
    <property type="entry name" value="Phenylalanyl-tRNA_Synthase"/>
</dbReference>
<dbReference type="InterPro" id="IPR010978">
    <property type="entry name" value="tRNA-bd_arm"/>
</dbReference>
<dbReference type="NCBIfam" id="TIGR00468">
    <property type="entry name" value="pheS"/>
    <property type="match status" value="1"/>
</dbReference>
<dbReference type="PANTHER" id="PTHR11538:SF41">
    <property type="entry name" value="PHENYLALANINE--TRNA LIGASE, MITOCHONDRIAL"/>
    <property type="match status" value="1"/>
</dbReference>
<dbReference type="PANTHER" id="PTHR11538">
    <property type="entry name" value="PHENYLALANYL-TRNA SYNTHETASE"/>
    <property type="match status" value="1"/>
</dbReference>
<dbReference type="Pfam" id="PF02912">
    <property type="entry name" value="Phe_tRNA-synt_N"/>
    <property type="match status" value="1"/>
</dbReference>
<dbReference type="Pfam" id="PF01409">
    <property type="entry name" value="tRNA-synt_2d"/>
    <property type="match status" value="1"/>
</dbReference>
<dbReference type="SUPFAM" id="SSF55681">
    <property type="entry name" value="Class II aaRS and biotin synthetases"/>
    <property type="match status" value="1"/>
</dbReference>
<dbReference type="SUPFAM" id="SSF46589">
    <property type="entry name" value="tRNA-binding arm"/>
    <property type="match status" value="1"/>
</dbReference>
<dbReference type="PROSITE" id="PS50862">
    <property type="entry name" value="AA_TRNA_LIGASE_II"/>
    <property type="match status" value="1"/>
</dbReference>
<comment type="catalytic activity">
    <reaction evidence="1">
        <text>tRNA(Phe) + L-phenylalanine + ATP = L-phenylalanyl-tRNA(Phe) + AMP + diphosphate + H(+)</text>
        <dbReference type="Rhea" id="RHEA:19413"/>
        <dbReference type="Rhea" id="RHEA-COMP:9668"/>
        <dbReference type="Rhea" id="RHEA-COMP:9699"/>
        <dbReference type="ChEBI" id="CHEBI:15378"/>
        <dbReference type="ChEBI" id="CHEBI:30616"/>
        <dbReference type="ChEBI" id="CHEBI:33019"/>
        <dbReference type="ChEBI" id="CHEBI:58095"/>
        <dbReference type="ChEBI" id="CHEBI:78442"/>
        <dbReference type="ChEBI" id="CHEBI:78531"/>
        <dbReference type="ChEBI" id="CHEBI:456215"/>
        <dbReference type="EC" id="6.1.1.20"/>
    </reaction>
</comment>
<comment type="cofactor">
    <cofactor evidence="1">
        <name>Mg(2+)</name>
        <dbReference type="ChEBI" id="CHEBI:18420"/>
    </cofactor>
    <text evidence="1">Binds 2 magnesium ions per tetramer.</text>
</comment>
<comment type="subunit">
    <text evidence="1">Tetramer of two alpha and two beta subunits.</text>
</comment>
<comment type="subcellular location">
    <subcellularLocation>
        <location evidence="1">Cytoplasm</location>
    </subcellularLocation>
</comment>
<comment type="similarity">
    <text evidence="1">Belongs to the class-II aminoacyl-tRNA synthetase family. Phe-tRNA synthetase alpha subunit type 1 subfamily.</text>
</comment>
<protein>
    <recommendedName>
        <fullName evidence="1">Phenylalanine--tRNA ligase alpha subunit</fullName>
        <ecNumber evidence="1">6.1.1.20</ecNumber>
    </recommendedName>
    <alternativeName>
        <fullName evidence="1">Phenylalanyl-tRNA synthetase alpha subunit</fullName>
        <shortName evidence="1">PheRS</shortName>
    </alternativeName>
</protein>
<proteinExistence type="inferred from homology"/>
<reference key="1">
    <citation type="journal article" date="2003" name="Nature">
        <title>Genome sequence of Bacillus cereus and comparative analysis with Bacillus anthracis.</title>
        <authorList>
            <person name="Ivanova N."/>
            <person name="Sorokin A."/>
            <person name="Anderson I."/>
            <person name="Galleron N."/>
            <person name="Candelon B."/>
            <person name="Kapatral V."/>
            <person name="Bhattacharyya A."/>
            <person name="Reznik G."/>
            <person name="Mikhailova N."/>
            <person name="Lapidus A."/>
            <person name="Chu L."/>
            <person name="Mazur M."/>
            <person name="Goltsman E."/>
            <person name="Larsen N."/>
            <person name="D'Souza M."/>
            <person name="Walunas T."/>
            <person name="Grechkin Y."/>
            <person name="Pusch G."/>
            <person name="Haselkorn R."/>
            <person name="Fonstein M."/>
            <person name="Ehrlich S.D."/>
            <person name="Overbeek R."/>
            <person name="Kyrpides N.C."/>
        </authorList>
    </citation>
    <scope>NUCLEOTIDE SEQUENCE [LARGE SCALE GENOMIC DNA]</scope>
    <source>
        <strain>ATCC 14579 / DSM 31 / CCUG 7414 / JCM 2152 / NBRC 15305 / NCIMB 9373 / NCTC 2599 / NRRL B-3711</strain>
    </source>
</reference>
<accession>Q817I6</accession>
<feature type="chain" id="PRO_0000126660" description="Phenylalanine--tRNA ligase alpha subunit">
    <location>
        <begin position="1"/>
        <end position="344"/>
    </location>
</feature>
<feature type="binding site" evidence="1">
    <location>
        <position position="256"/>
    </location>
    <ligand>
        <name>Mg(2+)</name>
        <dbReference type="ChEBI" id="CHEBI:18420"/>
        <note>shared with beta subunit</note>
    </ligand>
</feature>
<evidence type="ECO:0000255" key="1">
    <source>
        <dbReference type="HAMAP-Rule" id="MF_00281"/>
    </source>
</evidence>